<dbReference type="EC" id="2.7.1.130" evidence="1"/>
<dbReference type="EMBL" id="CP000352">
    <property type="protein sequence ID" value="ABF07421.1"/>
    <property type="molecule type" value="Genomic_DNA"/>
</dbReference>
<dbReference type="RefSeq" id="WP_011515396.1">
    <property type="nucleotide sequence ID" value="NC_007973.1"/>
</dbReference>
<dbReference type="SMR" id="Q1LR05"/>
<dbReference type="STRING" id="266264.Rmet_0535"/>
<dbReference type="KEGG" id="rme:Rmet_0535"/>
<dbReference type="eggNOG" id="COG1663">
    <property type="taxonomic scope" value="Bacteria"/>
</dbReference>
<dbReference type="HOGENOM" id="CLU_038816_2_0_4"/>
<dbReference type="UniPathway" id="UPA00359">
    <property type="reaction ID" value="UER00482"/>
</dbReference>
<dbReference type="Proteomes" id="UP000002429">
    <property type="component" value="Chromosome"/>
</dbReference>
<dbReference type="GO" id="GO:0005886">
    <property type="term" value="C:plasma membrane"/>
    <property type="evidence" value="ECO:0007669"/>
    <property type="project" value="TreeGrafter"/>
</dbReference>
<dbReference type="GO" id="GO:0005524">
    <property type="term" value="F:ATP binding"/>
    <property type="evidence" value="ECO:0007669"/>
    <property type="project" value="UniProtKB-UniRule"/>
</dbReference>
<dbReference type="GO" id="GO:0009029">
    <property type="term" value="F:tetraacyldisaccharide 4'-kinase activity"/>
    <property type="evidence" value="ECO:0007669"/>
    <property type="project" value="UniProtKB-UniRule"/>
</dbReference>
<dbReference type="GO" id="GO:0009245">
    <property type="term" value="P:lipid A biosynthetic process"/>
    <property type="evidence" value="ECO:0007669"/>
    <property type="project" value="UniProtKB-UniRule"/>
</dbReference>
<dbReference type="GO" id="GO:0009244">
    <property type="term" value="P:lipopolysaccharide core region biosynthetic process"/>
    <property type="evidence" value="ECO:0007669"/>
    <property type="project" value="TreeGrafter"/>
</dbReference>
<dbReference type="HAMAP" id="MF_00409">
    <property type="entry name" value="LpxK"/>
    <property type="match status" value="1"/>
</dbReference>
<dbReference type="InterPro" id="IPR003758">
    <property type="entry name" value="LpxK"/>
</dbReference>
<dbReference type="InterPro" id="IPR027417">
    <property type="entry name" value="P-loop_NTPase"/>
</dbReference>
<dbReference type="NCBIfam" id="TIGR00682">
    <property type="entry name" value="lpxK"/>
    <property type="match status" value="1"/>
</dbReference>
<dbReference type="PANTHER" id="PTHR42724">
    <property type="entry name" value="TETRAACYLDISACCHARIDE 4'-KINASE"/>
    <property type="match status" value="1"/>
</dbReference>
<dbReference type="PANTHER" id="PTHR42724:SF1">
    <property type="entry name" value="TETRAACYLDISACCHARIDE 4'-KINASE, MITOCHONDRIAL-RELATED"/>
    <property type="match status" value="1"/>
</dbReference>
<dbReference type="Pfam" id="PF02606">
    <property type="entry name" value="LpxK"/>
    <property type="match status" value="1"/>
</dbReference>
<dbReference type="SUPFAM" id="SSF52540">
    <property type="entry name" value="P-loop containing nucleoside triphosphate hydrolases"/>
    <property type="match status" value="1"/>
</dbReference>
<sequence>MAAPQHTLADFVTDQWQRRSWFTWLMWPLSLLFGLIARIRRYGYQQGWFKSTRLPMPVIVVGNVTVGGTGKTPAVIALAHALAEAGLRPGVVSRGYGVKLNHPRRVKPTSKAADVGDEPLLIARAADVPVWVFPDRALCTQAMLVSHPGVNVLLLDDGLQHYKLQRDFEIVMFDTRMGGNGMMLPAGPLREPLTRPRDATLINDPNFRATPDKPDVYGMRLELDEAWQLNDPTMSCDVSKFADKRVLAAAGIGHPERFFASLRQAGLSPATLPLPDHYDFVQDPFADNPAALEADVILITEKDAVKCERFDDPRIWVVPTTPVIDAGLIDKIRRVVQARNPAIATPVTVGQSTATGMADGLDKEHQDGQPAA</sequence>
<accession>Q1LR05</accession>
<feature type="chain" id="PRO_0000291230" description="Tetraacyldisaccharide 4'-kinase">
    <location>
        <begin position="1"/>
        <end position="372"/>
    </location>
</feature>
<feature type="region of interest" description="Disordered" evidence="2">
    <location>
        <begin position="351"/>
        <end position="372"/>
    </location>
</feature>
<feature type="compositionally biased region" description="Basic and acidic residues" evidence="2">
    <location>
        <begin position="360"/>
        <end position="372"/>
    </location>
</feature>
<feature type="binding site" evidence="1">
    <location>
        <begin position="65"/>
        <end position="72"/>
    </location>
    <ligand>
        <name>ATP</name>
        <dbReference type="ChEBI" id="CHEBI:30616"/>
    </ligand>
</feature>
<name>LPXK_CUPMC</name>
<gene>
    <name evidence="1" type="primary">lpxK</name>
    <name type="ordered locus">Rmet_0535</name>
</gene>
<evidence type="ECO:0000255" key="1">
    <source>
        <dbReference type="HAMAP-Rule" id="MF_00409"/>
    </source>
</evidence>
<evidence type="ECO:0000256" key="2">
    <source>
        <dbReference type="SAM" id="MobiDB-lite"/>
    </source>
</evidence>
<proteinExistence type="inferred from homology"/>
<reference key="1">
    <citation type="journal article" date="2010" name="PLoS ONE">
        <title>The complete genome sequence of Cupriavidus metallidurans strain CH34, a master survivalist in harsh and anthropogenic environments.</title>
        <authorList>
            <person name="Janssen P.J."/>
            <person name="Van Houdt R."/>
            <person name="Moors H."/>
            <person name="Monsieurs P."/>
            <person name="Morin N."/>
            <person name="Michaux A."/>
            <person name="Benotmane M.A."/>
            <person name="Leys N."/>
            <person name="Vallaeys T."/>
            <person name="Lapidus A."/>
            <person name="Monchy S."/>
            <person name="Medigue C."/>
            <person name="Taghavi S."/>
            <person name="McCorkle S."/>
            <person name="Dunn J."/>
            <person name="van der Lelie D."/>
            <person name="Mergeay M."/>
        </authorList>
    </citation>
    <scope>NUCLEOTIDE SEQUENCE [LARGE SCALE GENOMIC DNA]</scope>
    <source>
        <strain>ATCC 43123 / DSM 2839 / NBRC 102507 / CH34</strain>
    </source>
</reference>
<protein>
    <recommendedName>
        <fullName evidence="1">Tetraacyldisaccharide 4'-kinase</fullName>
        <ecNumber evidence="1">2.7.1.130</ecNumber>
    </recommendedName>
    <alternativeName>
        <fullName evidence="1">Lipid A 4'-kinase</fullName>
    </alternativeName>
</protein>
<keyword id="KW-0067">ATP-binding</keyword>
<keyword id="KW-0418">Kinase</keyword>
<keyword id="KW-0441">Lipid A biosynthesis</keyword>
<keyword id="KW-0444">Lipid biosynthesis</keyword>
<keyword id="KW-0443">Lipid metabolism</keyword>
<keyword id="KW-0547">Nucleotide-binding</keyword>
<keyword id="KW-1185">Reference proteome</keyword>
<keyword id="KW-0808">Transferase</keyword>
<comment type="function">
    <text evidence="1">Transfers the gamma-phosphate of ATP to the 4'-position of a tetraacyldisaccharide 1-phosphate intermediate (termed DS-1-P) to form tetraacyldisaccharide 1,4'-bis-phosphate (lipid IVA).</text>
</comment>
<comment type="catalytic activity">
    <reaction evidence="1">
        <text>a lipid A disaccharide + ATP = a lipid IVA + ADP + H(+)</text>
        <dbReference type="Rhea" id="RHEA:67840"/>
        <dbReference type="ChEBI" id="CHEBI:15378"/>
        <dbReference type="ChEBI" id="CHEBI:30616"/>
        <dbReference type="ChEBI" id="CHEBI:176343"/>
        <dbReference type="ChEBI" id="CHEBI:176425"/>
        <dbReference type="ChEBI" id="CHEBI:456216"/>
        <dbReference type="EC" id="2.7.1.130"/>
    </reaction>
</comment>
<comment type="pathway">
    <text evidence="1">Glycolipid biosynthesis; lipid IV(A) biosynthesis; lipid IV(A) from (3R)-3-hydroxytetradecanoyl-[acyl-carrier-protein] and UDP-N-acetyl-alpha-D-glucosamine: step 6/6.</text>
</comment>
<comment type="similarity">
    <text evidence="1">Belongs to the LpxK family.</text>
</comment>
<organism>
    <name type="scientific">Cupriavidus metallidurans (strain ATCC 43123 / DSM 2839 / NBRC 102507 / CH34)</name>
    <name type="common">Ralstonia metallidurans</name>
    <dbReference type="NCBI Taxonomy" id="266264"/>
    <lineage>
        <taxon>Bacteria</taxon>
        <taxon>Pseudomonadati</taxon>
        <taxon>Pseudomonadota</taxon>
        <taxon>Betaproteobacteria</taxon>
        <taxon>Burkholderiales</taxon>
        <taxon>Burkholderiaceae</taxon>
        <taxon>Cupriavidus</taxon>
    </lineage>
</organism>